<feature type="chain" id="PRO_0000263337" description="Peptide chain release factor 1">
    <location>
        <begin position="1"/>
        <end position="361"/>
    </location>
</feature>
<feature type="region of interest" description="Disordered" evidence="2">
    <location>
        <begin position="286"/>
        <end position="305"/>
    </location>
</feature>
<feature type="modified residue" description="N5-methylglutamine" evidence="1">
    <location>
        <position position="235"/>
    </location>
</feature>
<gene>
    <name evidence="1" type="primary">prfA</name>
    <name type="ordered locus">RPB_0075</name>
</gene>
<dbReference type="EMBL" id="CP000250">
    <property type="protein sequence ID" value="ABD04787.1"/>
    <property type="status" value="ALT_INIT"/>
    <property type="molecule type" value="Genomic_DNA"/>
</dbReference>
<dbReference type="RefSeq" id="WP_011438977.1">
    <property type="nucleotide sequence ID" value="NC_007778.1"/>
</dbReference>
<dbReference type="SMR" id="Q2J423"/>
<dbReference type="STRING" id="316058.RPB_0075"/>
<dbReference type="KEGG" id="rpb:RPB_0075"/>
<dbReference type="eggNOG" id="COG0216">
    <property type="taxonomic scope" value="Bacteria"/>
</dbReference>
<dbReference type="HOGENOM" id="CLU_036856_0_1_5"/>
<dbReference type="OrthoDB" id="9806673at2"/>
<dbReference type="Proteomes" id="UP000008809">
    <property type="component" value="Chromosome"/>
</dbReference>
<dbReference type="GO" id="GO:0005737">
    <property type="term" value="C:cytoplasm"/>
    <property type="evidence" value="ECO:0007669"/>
    <property type="project" value="UniProtKB-SubCell"/>
</dbReference>
<dbReference type="GO" id="GO:0016149">
    <property type="term" value="F:translation release factor activity, codon specific"/>
    <property type="evidence" value="ECO:0007669"/>
    <property type="project" value="UniProtKB-UniRule"/>
</dbReference>
<dbReference type="FunFam" id="3.30.160.20:FF:000004">
    <property type="entry name" value="Peptide chain release factor 1"/>
    <property type="match status" value="1"/>
</dbReference>
<dbReference type="FunFam" id="3.30.70.1660:FF:000002">
    <property type="entry name" value="Peptide chain release factor 1"/>
    <property type="match status" value="1"/>
</dbReference>
<dbReference type="FunFam" id="3.30.70.1660:FF:000004">
    <property type="entry name" value="Peptide chain release factor 1"/>
    <property type="match status" value="1"/>
</dbReference>
<dbReference type="Gene3D" id="3.30.160.20">
    <property type="match status" value="1"/>
</dbReference>
<dbReference type="Gene3D" id="3.30.70.1660">
    <property type="match status" value="1"/>
</dbReference>
<dbReference type="Gene3D" id="6.10.140.1950">
    <property type="match status" value="1"/>
</dbReference>
<dbReference type="HAMAP" id="MF_00093">
    <property type="entry name" value="Rel_fac_1"/>
    <property type="match status" value="1"/>
</dbReference>
<dbReference type="InterPro" id="IPR005139">
    <property type="entry name" value="PCRF"/>
</dbReference>
<dbReference type="InterPro" id="IPR000352">
    <property type="entry name" value="Pep_chain_release_fac_I"/>
</dbReference>
<dbReference type="InterPro" id="IPR045853">
    <property type="entry name" value="Pep_chain_release_fac_I_sf"/>
</dbReference>
<dbReference type="InterPro" id="IPR050057">
    <property type="entry name" value="Prokaryotic/Mito_RF"/>
</dbReference>
<dbReference type="InterPro" id="IPR004373">
    <property type="entry name" value="RF-1"/>
</dbReference>
<dbReference type="NCBIfam" id="TIGR00019">
    <property type="entry name" value="prfA"/>
    <property type="match status" value="1"/>
</dbReference>
<dbReference type="NCBIfam" id="NF001859">
    <property type="entry name" value="PRK00591.1"/>
    <property type="match status" value="1"/>
</dbReference>
<dbReference type="PANTHER" id="PTHR43804">
    <property type="entry name" value="LD18447P"/>
    <property type="match status" value="1"/>
</dbReference>
<dbReference type="PANTHER" id="PTHR43804:SF7">
    <property type="entry name" value="LD18447P"/>
    <property type="match status" value="1"/>
</dbReference>
<dbReference type="Pfam" id="PF03462">
    <property type="entry name" value="PCRF"/>
    <property type="match status" value="1"/>
</dbReference>
<dbReference type="Pfam" id="PF00472">
    <property type="entry name" value="RF-1"/>
    <property type="match status" value="1"/>
</dbReference>
<dbReference type="SMART" id="SM00937">
    <property type="entry name" value="PCRF"/>
    <property type="match status" value="1"/>
</dbReference>
<dbReference type="SUPFAM" id="SSF75620">
    <property type="entry name" value="Release factor"/>
    <property type="match status" value="1"/>
</dbReference>
<dbReference type="PROSITE" id="PS00745">
    <property type="entry name" value="RF_PROK_I"/>
    <property type="match status" value="1"/>
</dbReference>
<keyword id="KW-0963">Cytoplasm</keyword>
<keyword id="KW-0488">Methylation</keyword>
<keyword id="KW-0648">Protein biosynthesis</keyword>
<keyword id="KW-1185">Reference proteome</keyword>
<proteinExistence type="inferred from homology"/>
<evidence type="ECO:0000255" key="1">
    <source>
        <dbReference type="HAMAP-Rule" id="MF_00093"/>
    </source>
</evidence>
<evidence type="ECO:0000256" key="2">
    <source>
        <dbReference type="SAM" id="MobiDB-lite"/>
    </source>
</evidence>
<evidence type="ECO:0000305" key="3"/>
<reference key="1">
    <citation type="submission" date="2006-01" db="EMBL/GenBank/DDBJ databases">
        <title>Complete sequence of Rhodopseudomonas palustris HaA2.</title>
        <authorList>
            <consortium name="US DOE Joint Genome Institute"/>
            <person name="Copeland A."/>
            <person name="Lucas S."/>
            <person name="Lapidus A."/>
            <person name="Barry K."/>
            <person name="Detter J.C."/>
            <person name="Glavina T."/>
            <person name="Hammon N."/>
            <person name="Israni S."/>
            <person name="Pitluck S."/>
            <person name="Chain P."/>
            <person name="Malfatti S."/>
            <person name="Shin M."/>
            <person name="Vergez L."/>
            <person name="Schmutz J."/>
            <person name="Larimer F."/>
            <person name="Land M."/>
            <person name="Hauser L."/>
            <person name="Pelletier D.A."/>
            <person name="Kyrpides N."/>
            <person name="Anderson I."/>
            <person name="Oda Y."/>
            <person name="Harwood C.S."/>
            <person name="Richardson P."/>
        </authorList>
    </citation>
    <scope>NUCLEOTIDE SEQUENCE [LARGE SCALE GENOMIC DNA]</scope>
    <source>
        <strain>HaA2</strain>
    </source>
</reference>
<sequence length="361" mass="39826">MSNLPEAKLDVLLAHHASLEAQLLGEVAANDYVRITRELSELNPLVEAVKAYREVRDELGDIDDLLEDPATDPEMRAMAEAERDALDAHREDLIQQIRVALLPKDAMDERNVMLEIRAGTGGDEASLFAGDLFRMYEKFAALQGWSVEVISASEGTVGGFKEIIAEVKGRGAFAKLKFESGVHRVQRVPDTETQGRIHTSAATVAVLPEVEEVDVDIKPDDLKIDTMRAQGAGGQHVNKTESAIRITHLPTGIVVMMQDSRSQHKNRASAMNILRSRIYDAEQQRIDSARSAERKQKVGSGDRSERIRTYNFPQGRVTDHRINLTLYKLPQVIAGEALGELIDALTTEHQVAQLAAQGHAA</sequence>
<comment type="function">
    <text evidence="1">Peptide chain release factor 1 directs the termination of translation in response to the peptide chain termination codons UAG and UAA.</text>
</comment>
<comment type="subcellular location">
    <subcellularLocation>
        <location evidence="1">Cytoplasm</location>
    </subcellularLocation>
</comment>
<comment type="PTM">
    <text evidence="1">Methylated by PrmC. Methylation increases the termination efficiency of RF1.</text>
</comment>
<comment type="similarity">
    <text evidence="1">Belongs to the prokaryotic/mitochondrial release factor family.</text>
</comment>
<comment type="sequence caution" evidence="3">
    <conflict type="erroneous initiation">
        <sequence resource="EMBL-CDS" id="ABD04787"/>
    </conflict>
</comment>
<protein>
    <recommendedName>
        <fullName evidence="1">Peptide chain release factor 1</fullName>
        <shortName evidence="1">RF-1</shortName>
    </recommendedName>
</protein>
<organism>
    <name type="scientific">Rhodopseudomonas palustris (strain HaA2)</name>
    <dbReference type="NCBI Taxonomy" id="316058"/>
    <lineage>
        <taxon>Bacteria</taxon>
        <taxon>Pseudomonadati</taxon>
        <taxon>Pseudomonadota</taxon>
        <taxon>Alphaproteobacteria</taxon>
        <taxon>Hyphomicrobiales</taxon>
        <taxon>Nitrobacteraceae</taxon>
        <taxon>Rhodopseudomonas</taxon>
    </lineage>
</organism>
<accession>Q2J423</accession>
<name>RF1_RHOP2</name>